<name>ACTT2_HUMAN</name>
<proteinExistence type="evidence at protein level"/>
<gene>
    <name type="primary">ACTRT2</name>
    <name type="synonym">ARPM2</name>
</gene>
<organism>
    <name type="scientific">Homo sapiens</name>
    <name type="common">Human</name>
    <dbReference type="NCBI Taxonomy" id="9606"/>
    <lineage>
        <taxon>Eukaryota</taxon>
        <taxon>Metazoa</taxon>
        <taxon>Chordata</taxon>
        <taxon>Craniata</taxon>
        <taxon>Vertebrata</taxon>
        <taxon>Euteleostomi</taxon>
        <taxon>Mammalia</taxon>
        <taxon>Eutheria</taxon>
        <taxon>Euarchontoglires</taxon>
        <taxon>Primates</taxon>
        <taxon>Haplorrhini</taxon>
        <taxon>Catarrhini</taxon>
        <taxon>Hominidae</taxon>
        <taxon>Homo</taxon>
    </lineage>
</organism>
<keyword id="KW-0963">Cytoplasm</keyword>
<keyword id="KW-0206">Cytoskeleton</keyword>
<keyword id="KW-1267">Proteomics identification</keyword>
<keyword id="KW-1185">Reference proteome</keyword>
<feature type="chain" id="PRO_0000089144" description="Actin-related protein T2">
    <location>
        <begin position="1"/>
        <end position="377"/>
    </location>
</feature>
<feature type="sequence variant" id="VAR_020416" description="In dbSNP:rs3795263.">
    <original>G</original>
    <variation>R</variation>
    <location>
        <position position="247"/>
    </location>
</feature>
<feature type="sequence conflict" description="In Ref. 5; AAH29499." evidence="2" ref="5">
    <location>
        <position position="55"/>
    </location>
</feature>
<feature type="sequence conflict" description="In Ref. 1; BAB85862." evidence="2" ref="1">
    <original>A</original>
    <variation>P</variation>
    <location>
        <position position="224"/>
    </location>
</feature>
<accession>Q8TDY3</accession>
<accession>B1AN52</accession>
<accession>Q8NHS6</accession>
<accession>Q8TDG1</accession>
<evidence type="ECO:0000250" key="1"/>
<evidence type="ECO:0000305" key="2"/>
<reference key="1">
    <citation type="journal article" date="2001" name="Biochim. Biophys. Acta">
        <title>Identification of two cDNAs for human actin-related proteins (Arps) that have remarkable similarity to conventional actin.</title>
        <authorList>
            <person name="Harata M."/>
            <person name="Nishimori K."/>
            <person name="Hatta S."/>
        </authorList>
    </citation>
    <scope>NUCLEOTIDE SEQUENCE [MRNA]</scope>
</reference>
<reference key="2">
    <citation type="journal article" date="2002" name="Exp. Cell Res.">
        <title>Novel actin-related proteins Arp-T1 and Arp-T2 as components of the cytoskeletal calyx of the mammalian sperm head.</title>
        <authorList>
            <person name="Heid H.W."/>
            <person name="Figge U."/>
            <person name="Winter S."/>
            <person name="Kuhn C."/>
            <person name="Zimbelmann R."/>
            <person name="Franke W.W."/>
        </authorList>
    </citation>
    <scope>NUCLEOTIDE SEQUENCE [MRNA]</scope>
</reference>
<reference key="3">
    <citation type="journal article" date="2006" name="Nature">
        <title>The DNA sequence and biological annotation of human chromosome 1.</title>
        <authorList>
            <person name="Gregory S.G."/>
            <person name="Barlow K.F."/>
            <person name="McLay K.E."/>
            <person name="Kaul R."/>
            <person name="Swarbreck D."/>
            <person name="Dunham A."/>
            <person name="Scott C.E."/>
            <person name="Howe K.L."/>
            <person name="Woodfine K."/>
            <person name="Spencer C.C.A."/>
            <person name="Jones M.C."/>
            <person name="Gillson C."/>
            <person name="Searle S."/>
            <person name="Zhou Y."/>
            <person name="Kokocinski F."/>
            <person name="McDonald L."/>
            <person name="Evans R."/>
            <person name="Phillips K."/>
            <person name="Atkinson A."/>
            <person name="Cooper R."/>
            <person name="Jones C."/>
            <person name="Hall R.E."/>
            <person name="Andrews T.D."/>
            <person name="Lloyd C."/>
            <person name="Ainscough R."/>
            <person name="Almeida J.P."/>
            <person name="Ambrose K.D."/>
            <person name="Anderson F."/>
            <person name="Andrew R.W."/>
            <person name="Ashwell R.I.S."/>
            <person name="Aubin K."/>
            <person name="Babbage A.K."/>
            <person name="Bagguley C.L."/>
            <person name="Bailey J."/>
            <person name="Beasley H."/>
            <person name="Bethel G."/>
            <person name="Bird C.P."/>
            <person name="Bray-Allen S."/>
            <person name="Brown J.Y."/>
            <person name="Brown A.J."/>
            <person name="Buckley D."/>
            <person name="Burton J."/>
            <person name="Bye J."/>
            <person name="Carder C."/>
            <person name="Chapman J.C."/>
            <person name="Clark S.Y."/>
            <person name="Clarke G."/>
            <person name="Clee C."/>
            <person name="Cobley V."/>
            <person name="Collier R.E."/>
            <person name="Corby N."/>
            <person name="Coville G.J."/>
            <person name="Davies J."/>
            <person name="Deadman R."/>
            <person name="Dunn M."/>
            <person name="Earthrowl M."/>
            <person name="Ellington A.G."/>
            <person name="Errington H."/>
            <person name="Frankish A."/>
            <person name="Frankland J."/>
            <person name="French L."/>
            <person name="Garner P."/>
            <person name="Garnett J."/>
            <person name="Gay L."/>
            <person name="Ghori M.R.J."/>
            <person name="Gibson R."/>
            <person name="Gilby L.M."/>
            <person name="Gillett W."/>
            <person name="Glithero R.J."/>
            <person name="Grafham D.V."/>
            <person name="Griffiths C."/>
            <person name="Griffiths-Jones S."/>
            <person name="Grocock R."/>
            <person name="Hammond S."/>
            <person name="Harrison E.S.I."/>
            <person name="Hart E."/>
            <person name="Haugen E."/>
            <person name="Heath P.D."/>
            <person name="Holmes S."/>
            <person name="Holt K."/>
            <person name="Howden P.J."/>
            <person name="Hunt A.R."/>
            <person name="Hunt S.E."/>
            <person name="Hunter G."/>
            <person name="Isherwood J."/>
            <person name="James R."/>
            <person name="Johnson C."/>
            <person name="Johnson D."/>
            <person name="Joy A."/>
            <person name="Kay M."/>
            <person name="Kershaw J.K."/>
            <person name="Kibukawa M."/>
            <person name="Kimberley A.M."/>
            <person name="King A."/>
            <person name="Knights A.J."/>
            <person name="Lad H."/>
            <person name="Laird G."/>
            <person name="Lawlor S."/>
            <person name="Leongamornlert D.A."/>
            <person name="Lloyd D.M."/>
            <person name="Loveland J."/>
            <person name="Lovell J."/>
            <person name="Lush M.J."/>
            <person name="Lyne R."/>
            <person name="Martin S."/>
            <person name="Mashreghi-Mohammadi M."/>
            <person name="Matthews L."/>
            <person name="Matthews N.S.W."/>
            <person name="McLaren S."/>
            <person name="Milne S."/>
            <person name="Mistry S."/>
            <person name="Moore M.J.F."/>
            <person name="Nickerson T."/>
            <person name="O'Dell C.N."/>
            <person name="Oliver K."/>
            <person name="Palmeiri A."/>
            <person name="Palmer S.A."/>
            <person name="Parker A."/>
            <person name="Patel D."/>
            <person name="Pearce A.V."/>
            <person name="Peck A.I."/>
            <person name="Pelan S."/>
            <person name="Phelps K."/>
            <person name="Phillimore B.J."/>
            <person name="Plumb R."/>
            <person name="Rajan J."/>
            <person name="Raymond C."/>
            <person name="Rouse G."/>
            <person name="Saenphimmachak C."/>
            <person name="Sehra H.K."/>
            <person name="Sheridan E."/>
            <person name="Shownkeen R."/>
            <person name="Sims S."/>
            <person name="Skuce C.D."/>
            <person name="Smith M."/>
            <person name="Steward C."/>
            <person name="Subramanian S."/>
            <person name="Sycamore N."/>
            <person name="Tracey A."/>
            <person name="Tromans A."/>
            <person name="Van Helmond Z."/>
            <person name="Wall M."/>
            <person name="Wallis J.M."/>
            <person name="White S."/>
            <person name="Whitehead S.L."/>
            <person name="Wilkinson J.E."/>
            <person name="Willey D.L."/>
            <person name="Williams H."/>
            <person name="Wilming L."/>
            <person name="Wray P.W."/>
            <person name="Wu Z."/>
            <person name="Coulson A."/>
            <person name="Vaudin M."/>
            <person name="Sulston J.E."/>
            <person name="Durbin R.M."/>
            <person name="Hubbard T."/>
            <person name="Wooster R."/>
            <person name="Dunham I."/>
            <person name="Carter N.P."/>
            <person name="McVean G."/>
            <person name="Ross M.T."/>
            <person name="Harrow J."/>
            <person name="Olson M.V."/>
            <person name="Beck S."/>
            <person name="Rogers J."/>
            <person name="Bentley D.R."/>
        </authorList>
    </citation>
    <scope>NUCLEOTIDE SEQUENCE [LARGE SCALE GENOMIC DNA]</scope>
</reference>
<reference key="4">
    <citation type="submission" date="2005-07" db="EMBL/GenBank/DDBJ databases">
        <authorList>
            <person name="Mural R.J."/>
            <person name="Istrail S."/>
            <person name="Sutton G.G."/>
            <person name="Florea L."/>
            <person name="Halpern A.L."/>
            <person name="Mobarry C.M."/>
            <person name="Lippert R."/>
            <person name="Walenz B."/>
            <person name="Shatkay H."/>
            <person name="Dew I."/>
            <person name="Miller J.R."/>
            <person name="Flanigan M.J."/>
            <person name="Edwards N.J."/>
            <person name="Bolanos R."/>
            <person name="Fasulo D."/>
            <person name="Halldorsson B.V."/>
            <person name="Hannenhalli S."/>
            <person name="Turner R."/>
            <person name="Yooseph S."/>
            <person name="Lu F."/>
            <person name="Nusskern D.R."/>
            <person name="Shue B.C."/>
            <person name="Zheng X.H."/>
            <person name="Zhong F."/>
            <person name="Delcher A.L."/>
            <person name="Huson D.H."/>
            <person name="Kravitz S.A."/>
            <person name="Mouchard L."/>
            <person name="Reinert K."/>
            <person name="Remington K.A."/>
            <person name="Clark A.G."/>
            <person name="Waterman M.S."/>
            <person name="Eichler E.E."/>
            <person name="Adams M.D."/>
            <person name="Hunkapiller M.W."/>
            <person name="Myers E.W."/>
            <person name="Venter J.C."/>
        </authorList>
    </citation>
    <scope>NUCLEOTIDE SEQUENCE [LARGE SCALE GENOMIC DNA]</scope>
</reference>
<reference key="5">
    <citation type="journal article" date="2004" name="Genome Res.">
        <title>The status, quality, and expansion of the NIH full-length cDNA project: the Mammalian Gene Collection (MGC).</title>
        <authorList>
            <consortium name="The MGC Project Team"/>
        </authorList>
    </citation>
    <scope>NUCLEOTIDE SEQUENCE [LARGE SCALE MRNA]</scope>
    <source>
        <tissue>Testis</tissue>
    </source>
</reference>
<dbReference type="EMBL" id="AB057364">
    <property type="protein sequence ID" value="BAB85862.1"/>
    <property type="molecule type" value="mRNA"/>
</dbReference>
<dbReference type="EMBL" id="AF440740">
    <property type="protein sequence ID" value="AAM00433.1"/>
    <property type="molecule type" value="mRNA"/>
</dbReference>
<dbReference type="EMBL" id="AL356984">
    <property type="status" value="NOT_ANNOTATED_CDS"/>
    <property type="molecule type" value="Genomic_DNA"/>
</dbReference>
<dbReference type="EMBL" id="CH471248">
    <property type="protein sequence ID" value="EAW61142.1"/>
    <property type="molecule type" value="Genomic_DNA"/>
</dbReference>
<dbReference type="EMBL" id="BC029499">
    <property type="protein sequence ID" value="AAH29499.1"/>
    <property type="molecule type" value="mRNA"/>
</dbReference>
<dbReference type="CCDS" id="CCDS45.1"/>
<dbReference type="RefSeq" id="NP_536356.3">
    <property type="nucleotide sequence ID" value="NM_080431.4"/>
</dbReference>
<dbReference type="SMR" id="Q8TDY3"/>
<dbReference type="BioGRID" id="126639">
    <property type="interactions" value="13"/>
</dbReference>
<dbReference type="FunCoup" id="Q8TDY3">
    <property type="interactions" value="11"/>
</dbReference>
<dbReference type="IntAct" id="Q8TDY3">
    <property type="interactions" value="9"/>
</dbReference>
<dbReference type="STRING" id="9606.ENSP00000367658"/>
<dbReference type="iPTMnet" id="Q8TDY3"/>
<dbReference type="PhosphoSitePlus" id="Q8TDY3"/>
<dbReference type="BioMuta" id="ACTRT2"/>
<dbReference type="DMDM" id="47115879"/>
<dbReference type="jPOST" id="Q8TDY3"/>
<dbReference type="MassIVE" id="Q8TDY3"/>
<dbReference type="PaxDb" id="9606-ENSP00000367658"/>
<dbReference type="PeptideAtlas" id="Q8TDY3"/>
<dbReference type="ProteomicsDB" id="74370"/>
<dbReference type="Antibodypedia" id="1628">
    <property type="antibodies" value="131 antibodies from 25 providers"/>
</dbReference>
<dbReference type="DNASU" id="140625"/>
<dbReference type="Ensembl" id="ENST00000378404.4">
    <property type="protein sequence ID" value="ENSP00000367658.2"/>
    <property type="gene ID" value="ENSG00000169717.7"/>
</dbReference>
<dbReference type="GeneID" id="140625"/>
<dbReference type="KEGG" id="hsa:140625"/>
<dbReference type="MANE-Select" id="ENST00000378404.4">
    <property type="protein sequence ID" value="ENSP00000367658.2"/>
    <property type="RefSeq nucleotide sequence ID" value="NM_080431.5"/>
    <property type="RefSeq protein sequence ID" value="NP_536356.3"/>
</dbReference>
<dbReference type="UCSC" id="uc001ajz.4">
    <property type="organism name" value="human"/>
</dbReference>
<dbReference type="AGR" id="HGNC:24026"/>
<dbReference type="CTD" id="140625"/>
<dbReference type="DisGeNET" id="140625"/>
<dbReference type="GeneCards" id="ACTRT2"/>
<dbReference type="HGNC" id="HGNC:24026">
    <property type="gene designation" value="ACTRT2"/>
</dbReference>
<dbReference type="HPA" id="ENSG00000169717">
    <property type="expression patterns" value="Tissue enriched (testis)"/>
</dbReference>
<dbReference type="MIM" id="608535">
    <property type="type" value="gene"/>
</dbReference>
<dbReference type="neXtProt" id="NX_Q8TDY3"/>
<dbReference type="OpenTargets" id="ENSG00000169717"/>
<dbReference type="PharmGKB" id="PA142672647"/>
<dbReference type="VEuPathDB" id="HostDB:ENSG00000169717"/>
<dbReference type="eggNOG" id="KOG0676">
    <property type="taxonomic scope" value="Eukaryota"/>
</dbReference>
<dbReference type="GeneTree" id="ENSGT00940000162911"/>
<dbReference type="HOGENOM" id="CLU_027965_0_2_1"/>
<dbReference type="InParanoid" id="Q8TDY3"/>
<dbReference type="OMA" id="DQLYQAP"/>
<dbReference type="OrthoDB" id="10053773at2759"/>
<dbReference type="PAN-GO" id="Q8TDY3">
    <property type="GO annotations" value="0 GO annotations based on evolutionary models"/>
</dbReference>
<dbReference type="PhylomeDB" id="Q8TDY3"/>
<dbReference type="TreeFam" id="TF354237"/>
<dbReference type="PathwayCommons" id="Q8TDY3"/>
<dbReference type="SignaLink" id="Q8TDY3"/>
<dbReference type="BioGRID-ORCS" id="140625">
    <property type="hits" value="8 hits in 1141 CRISPR screens"/>
</dbReference>
<dbReference type="GenomeRNAi" id="140625"/>
<dbReference type="Pharos" id="Q8TDY3">
    <property type="development level" value="Tdark"/>
</dbReference>
<dbReference type="PRO" id="PR:Q8TDY3"/>
<dbReference type="Proteomes" id="UP000005640">
    <property type="component" value="Chromosome 1"/>
</dbReference>
<dbReference type="RNAct" id="Q8TDY3">
    <property type="molecule type" value="protein"/>
</dbReference>
<dbReference type="Bgee" id="ENSG00000169717">
    <property type="expression patterns" value="Expressed in left testis and 46 other cell types or tissues"/>
</dbReference>
<dbReference type="GO" id="GO:0015629">
    <property type="term" value="C:actin cytoskeleton"/>
    <property type="evidence" value="ECO:0000318"/>
    <property type="project" value="GO_Central"/>
</dbReference>
<dbReference type="GO" id="GO:0005737">
    <property type="term" value="C:cytoplasm"/>
    <property type="evidence" value="ECO:0007669"/>
    <property type="project" value="UniProtKB-KW"/>
</dbReference>
<dbReference type="CDD" id="cd13397">
    <property type="entry name" value="ASKHA_NBD_actin_Arp-T1-3"/>
    <property type="match status" value="1"/>
</dbReference>
<dbReference type="FunFam" id="3.90.640.10:FF:000007">
    <property type="entry name" value="Actin like 7B"/>
    <property type="match status" value="1"/>
</dbReference>
<dbReference type="FunFam" id="3.30.420.40:FF:000018">
    <property type="entry name" value="Actin-like protein (Centractin)"/>
    <property type="match status" value="1"/>
</dbReference>
<dbReference type="Gene3D" id="3.30.420.40">
    <property type="match status" value="2"/>
</dbReference>
<dbReference type="Gene3D" id="3.90.640.10">
    <property type="entry name" value="Actin, Chain A, domain 4"/>
    <property type="match status" value="1"/>
</dbReference>
<dbReference type="InterPro" id="IPR004000">
    <property type="entry name" value="Actin"/>
</dbReference>
<dbReference type="InterPro" id="IPR020902">
    <property type="entry name" value="Actin/actin-like_CS"/>
</dbReference>
<dbReference type="InterPro" id="IPR043129">
    <property type="entry name" value="ATPase_NBD"/>
</dbReference>
<dbReference type="PANTHER" id="PTHR11937">
    <property type="entry name" value="ACTIN"/>
    <property type="match status" value="1"/>
</dbReference>
<dbReference type="Pfam" id="PF00022">
    <property type="entry name" value="Actin"/>
    <property type="match status" value="1"/>
</dbReference>
<dbReference type="PRINTS" id="PR00190">
    <property type="entry name" value="ACTIN"/>
</dbReference>
<dbReference type="SMART" id="SM00268">
    <property type="entry name" value="ACTIN"/>
    <property type="match status" value="1"/>
</dbReference>
<dbReference type="SUPFAM" id="SSF53067">
    <property type="entry name" value="Actin-like ATPase domain"/>
    <property type="match status" value="2"/>
</dbReference>
<dbReference type="PROSITE" id="PS01132">
    <property type="entry name" value="ACTINS_ACT_LIKE"/>
    <property type="match status" value="1"/>
</dbReference>
<protein>
    <recommendedName>
        <fullName>Actin-related protein T2</fullName>
        <shortName>ARP-T2</shortName>
    </recommendedName>
    <alternativeName>
        <fullName>Actin-related protein M2</fullName>
    </alternativeName>
</protein>
<comment type="interaction">
    <interactant intactId="EBI-54800759">
        <id>Q8TDY3</id>
    </interactant>
    <interactant intactId="EBI-2555126">
        <id>Q9H2J4</id>
        <label>PDCL3</label>
    </interactant>
    <organismsDiffer>false</organismsDiffer>
    <experiments>2</experiments>
</comment>
<comment type="subcellular location">
    <subcellularLocation>
        <location evidence="1">Cytoplasm</location>
        <location evidence="1">Cytoskeleton</location>
    </subcellularLocation>
</comment>
<comment type="similarity">
    <text evidence="2">Belongs to the actin family.</text>
</comment>
<sequence length="377" mass="41702">MFNPHALDSPAVIFDNGSGFCKAGLSGEFGPRHMVSSIVGHLKFQAPSAEANQKKYFVGEEALYKQEALQLHSPFERGLITGWDDVERLWKHLFEWELGVKPSDQPLLATEPSLNPRENREKMAEVMFENFGVPAFYLSDQAVLALYASACVTGLVVDSGDAVTCTVPIFEGYSLPHAVTKLHVAGRDITELLMQLLLASGHTFPCQLDKGLVDDIKKKLCYVALEPEKELSRRPEEVLREYKLPDGNIISLGDPLHQAPEALFVPQQLGSQSPGLSNMVSSSITKCDTDIQKILFGEIVLSGGTTLFHGLDDRLLKELEQLASKDTPIKITAPPDRWFSTWIGASIVTSLSSFKQMWVTAADFKEFGTSVVQRRCF</sequence>